<dbReference type="EMBL" id="BX936398">
    <property type="protein sequence ID" value="CAH19337.1"/>
    <property type="molecule type" value="Genomic_DNA"/>
</dbReference>
<dbReference type="RefSeq" id="WP_002208943.1">
    <property type="nucleotide sequence ID" value="NZ_CP009712.1"/>
</dbReference>
<dbReference type="SMR" id="Q66G85"/>
<dbReference type="GeneID" id="96663576"/>
<dbReference type="KEGG" id="ypo:BZ17_2500"/>
<dbReference type="KEGG" id="yps:YPTB0097"/>
<dbReference type="PATRIC" id="fig|273123.14.peg.2621"/>
<dbReference type="Proteomes" id="UP000001011">
    <property type="component" value="Chromosome"/>
</dbReference>
<dbReference type="GO" id="GO:0009376">
    <property type="term" value="C:HslUV protease complex"/>
    <property type="evidence" value="ECO:0007669"/>
    <property type="project" value="UniProtKB-UniRule"/>
</dbReference>
<dbReference type="GO" id="GO:0005524">
    <property type="term" value="F:ATP binding"/>
    <property type="evidence" value="ECO:0007669"/>
    <property type="project" value="UniProtKB-UniRule"/>
</dbReference>
<dbReference type="GO" id="GO:0016887">
    <property type="term" value="F:ATP hydrolysis activity"/>
    <property type="evidence" value="ECO:0007669"/>
    <property type="project" value="InterPro"/>
</dbReference>
<dbReference type="GO" id="GO:0008233">
    <property type="term" value="F:peptidase activity"/>
    <property type="evidence" value="ECO:0007669"/>
    <property type="project" value="InterPro"/>
</dbReference>
<dbReference type="GO" id="GO:0036402">
    <property type="term" value="F:proteasome-activating activity"/>
    <property type="evidence" value="ECO:0007669"/>
    <property type="project" value="UniProtKB-UniRule"/>
</dbReference>
<dbReference type="GO" id="GO:0043335">
    <property type="term" value="P:protein unfolding"/>
    <property type="evidence" value="ECO:0007669"/>
    <property type="project" value="UniProtKB-UniRule"/>
</dbReference>
<dbReference type="GO" id="GO:0051603">
    <property type="term" value="P:proteolysis involved in protein catabolic process"/>
    <property type="evidence" value="ECO:0007669"/>
    <property type="project" value="TreeGrafter"/>
</dbReference>
<dbReference type="CDD" id="cd19498">
    <property type="entry name" value="RecA-like_HslU"/>
    <property type="match status" value="1"/>
</dbReference>
<dbReference type="FunFam" id="1.10.8.10:FF:000028">
    <property type="entry name" value="ATP-dependent protease ATPase subunit HslU"/>
    <property type="match status" value="2"/>
</dbReference>
<dbReference type="FunFam" id="1.10.8.60:FF:000027">
    <property type="entry name" value="ATP-dependent protease ATPase subunit HslU"/>
    <property type="match status" value="1"/>
</dbReference>
<dbReference type="FunFam" id="3.40.50.300:FF:000213">
    <property type="entry name" value="ATP-dependent protease ATPase subunit HslU"/>
    <property type="match status" value="1"/>
</dbReference>
<dbReference type="FunFam" id="3.40.50.300:FF:000220">
    <property type="entry name" value="ATP-dependent protease ATPase subunit HslU"/>
    <property type="match status" value="1"/>
</dbReference>
<dbReference type="Gene3D" id="1.10.8.60">
    <property type="match status" value="1"/>
</dbReference>
<dbReference type="Gene3D" id="1.10.8.10">
    <property type="entry name" value="DNA helicase RuvA subunit, C-terminal domain"/>
    <property type="match status" value="1"/>
</dbReference>
<dbReference type="Gene3D" id="3.40.50.300">
    <property type="entry name" value="P-loop containing nucleotide triphosphate hydrolases"/>
    <property type="match status" value="2"/>
</dbReference>
<dbReference type="HAMAP" id="MF_00249">
    <property type="entry name" value="HslU"/>
    <property type="match status" value="1"/>
</dbReference>
<dbReference type="InterPro" id="IPR003593">
    <property type="entry name" value="AAA+_ATPase"/>
</dbReference>
<dbReference type="InterPro" id="IPR050052">
    <property type="entry name" value="ATP-dep_Clp_protease_ClpX"/>
</dbReference>
<dbReference type="InterPro" id="IPR003959">
    <property type="entry name" value="ATPase_AAA_core"/>
</dbReference>
<dbReference type="InterPro" id="IPR019489">
    <property type="entry name" value="Clp_ATPase_C"/>
</dbReference>
<dbReference type="InterPro" id="IPR004491">
    <property type="entry name" value="HslU"/>
</dbReference>
<dbReference type="InterPro" id="IPR027417">
    <property type="entry name" value="P-loop_NTPase"/>
</dbReference>
<dbReference type="NCBIfam" id="TIGR00390">
    <property type="entry name" value="hslU"/>
    <property type="match status" value="1"/>
</dbReference>
<dbReference type="NCBIfam" id="NF003544">
    <property type="entry name" value="PRK05201.1"/>
    <property type="match status" value="1"/>
</dbReference>
<dbReference type="PANTHER" id="PTHR48102">
    <property type="entry name" value="ATP-DEPENDENT CLP PROTEASE ATP-BINDING SUBUNIT CLPX-LIKE, MITOCHONDRIAL-RELATED"/>
    <property type="match status" value="1"/>
</dbReference>
<dbReference type="PANTHER" id="PTHR48102:SF3">
    <property type="entry name" value="ATP-DEPENDENT PROTEASE ATPASE SUBUNIT HSLU"/>
    <property type="match status" value="1"/>
</dbReference>
<dbReference type="Pfam" id="PF00004">
    <property type="entry name" value="AAA"/>
    <property type="match status" value="1"/>
</dbReference>
<dbReference type="Pfam" id="PF07724">
    <property type="entry name" value="AAA_2"/>
    <property type="match status" value="1"/>
</dbReference>
<dbReference type="SMART" id="SM00382">
    <property type="entry name" value="AAA"/>
    <property type="match status" value="1"/>
</dbReference>
<dbReference type="SMART" id="SM01086">
    <property type="entry name" value="ClpB_D2-small"/>
    <property type="match status" value="1"/>
</dbReference>
<dbReference type="SUPFAM" id="SSF52540">
    <property type="entry name" value="P-loop containing nucleoside triphosphate hydrolases"/>
    <property type="match status" value="1"/>
</dbReference>
<keyword id="KW-0067">ATP-binding</keyword>
<keyword id="KW-0143">Chaperone</keyword>
<keyword id="KW-0963">Cytoplasm</keyword>
<keyword id="KW-0547">Nucleotide-binding</keyword>
<organism>
    <name type="scientific">Yersinia pseudotuberculosis serotype I (strain IP32953)</name>
    <dbReference type="NCBI Taxonomy" id="273123"/>
    <lineage>
        <taxon>Bacteria</taxon>
        <taxon>Pseudomonadati</taxon>
        <taxon>Pseudomonadota</taxon>
        <taxon>Gammaproteobacteria</taxon>
        <taxon>Enterobacterales</taxon>
        <taxon>Yersiniaceae</taxon>
        <taxon>Yersinia</taxon>
    </lineage>
</organism>
<gene>
    <name evidence="1" type="primary">hslU</name>
    <name type="ordered locus">YPTB0097</name>
</gene>
<proteinExistence type="inferred from homology"/>
<sequence length="443" mass="49804">MSEMTPREIVSELDSHIIGQDKAKRAVAIALRNRWRRMQLNEELRHEVTPKNILMIGPTGVGKTEIARRLAKLANAPFIKVEATKFTEVGYVGKEVDSIIRDLTDAAVKMVRHQSIEKMRYRAEELAEERILDVLIPPAKNNWGVPDESQEPSATRQTFRKKLREGQLDDKEIEIDLAAAPMGVEIMAPPGMEEMTNQLQSMFQNIAGQKQKPRKIKIKEALKLLIEEEAAKLVNPEELKQQAIDAVEQHGIVFIDEIDKICKRGQTSGPDVSREGVQRDLLPLVEGCTVSTKHGMVKTDHILFIASGAFQVSSPSDLIPELQGRLPIRVELQALTTDDFERILTEPSASLTEQYKALMATEGVTIEFTREGIRKIAEAAWQVNERTENIGARRLHTVLERLMEDISYDASESSGQSITIDAEYVGKHLDELVADEDLSRFIL</sequence>
<reference key="1">
    <citation type="journal article" date="2004" name="Proc. Natl. Acad. Sci. U.S.A.">
        <title>Insights into the evolution of Yersinia pestis through whole-genome comparison with Yersinia pseudotuberculosis.</title>
        <authorList>
            <person name="Chain P.S.G."/>
            <person name="Carniel E."/>
            <person name="Larimer F.W."/>
            <person name="Lamerdin J."/>
            <person name="Stoutland P.O."/>
            <person name="Regala W.M."/>
            <person name="Georgescu A.M."/>
            <person name="Vergez L.M."/>
            <person name="Land M.L."/>
            <person name="Motin V.L."/>
            <person name="Brubaker R.R."/>
            <person name="Fowler J."/>
            <person name="Hinnebusch J."/>
            <person name="Marceau M."/>
            <person name="Medigue C."/>
            <person name="Simonet M."/>
            <person name="Chenal-Francisque V."/>
            <person name="Souza B."/>
            <person name="Dacheux D."/>
            <person name="Elliott J.M."/>
            <person name="Derbise A."/>
            <person name="Hauser L.J."/>
            <person name="Garcia E."/>
        </authorList>
    </citation>
    <scope>NUCLEOTIDE SEQUENCE [LARGE SCALE GENOMIC DNA]</scope>
    <source>
        <strain>IP32953</strain>
    </source>
</reference>
<protein>
    <recommendedName>
        <fullName evidence="1">ATP-dependent protease ATPase subunit HslU</fullName>
    </recommendedName>
    <alternativeName>
        <fullName evidence="1">Unfoldase HslU</fullName>
    </alternativeName>
</protein>
<name>HSLU_YERPS</name>
<comment type="function">
    <text evidence="1">ATPase subunit of a proteasome-like degradation complex; this subunit has chaperone activity. The binding of ATP and its subsequent hydrolysis by HslU are essential for unfolding of protein substrates subsequently hydrolyzed by HslV. HslU recognizes the N-terminal part of its protein substrates and unfolds these before they are guided to HslV for hydrolysis.</text>
</comment>
<comment type="subunit">
    <text evidence="1">A double ring-shaped homohexamer of HslV is capped on each side by a ring-shaped HslU homohexamer. The assembly of the HslU/HslV complex is dependent on binding of ATP.</text>
</comment>
<comment type="subcellular location">
    <subcellularLocation>
        <location evidence="1">Cytoplasm</location>
    </subcellularLocation>
</comment>
<comment type="similarity">
    <text evidence="1">Belongs to the ClpX chaperone family. HslU subfamily.</text>
</comment>
<evidence type="ECO:0000255" key="1">
    <source>
        <dbReference type="HAMAP-Rule" id="MF_00249"/>
    </source>
</evidence>
<accession>Q66G85</accession>
<feature type="chain" id="PRO_0000160567" description="ATP-dependent protease ATPase subunit HslU">
    <location>
        <begin position="1"/>
        <end position="443"/>
    </location>
</feature>
<feature type="binding site" evidence="1">
    <location>
        <position position="18"/>
    </location>
    <ligand>
        <name>ATP</name>
        <dbReference type="ChEBI" id="CHEBI:30616"/>
    </ligand>
</feature>
<feature type="binding site" evidence="1">
    <location>
        <begin position="60"/>
        <end position="65"/>
    </location>
    <ligand>
        <name>ATP</name>
        <dbReference type="ChEBI" id="CHEBI:30616"/>
    </ligand>
</feature>
<feature type="binding site" evidence="1">
    <location>
        <position position="256"/>
    </location>
    <ligand>
        <name>ATP</name>
        <dbReference type="ChEBI" id="CHEBI:30616"/>
    </ligand>
</feature>
<feature type="binding site" evidence="1">
    <location>
        <position position="321"/>
    </location>
    <ligand>
        <name>ATP</name>
        <dbReference type="ChEBI" id="CHEBI:30616"/>
    </ligand>
</feature>
<feature type="binding site" evidence="1">
    <location>
        <position position="393"/>
    </location>
    <ligand>
        <name>ATP</name>
        <dbReference type="ChEBI" id="CHEBI:30616"/>
    </ligand>
</feature>